<feature type="peptide" id="PRO_0000248468" description="[Val1,Thr6]-bradykinyl-Val,Asp" evidence="2">
    <location>
        <begin position="1"/>
        <end position="11"/>
    </location>
</feature>
<feature type="modified residue" description="4-hydroxyproline; partial" evidence="2">
    <location>
        <position position="2"/>
    </location>
</feature>
<name>BRK7_PITHY</name>
<comment type="function">
    <text evidence="1">Produces in vitro relaxation of rat arterial smooth muscle and constriction of intestinal smooth muscle (By similarity). May target bradykinin receptors (BDKRB).</text>
</comment>
<comment type="subcellular location">
    <subcellularLocation>
        <location>Secreted</location>
    </subcellularLocation>
</comment>
<comment type="tissue specificity">
    <text evidence="2">Expressed by the skin glands.</text>
</comment>
<comment type="mass spectrometry"/>
<comment type="mass spectrometry">
    <text>Hydroxylated.</text>
</comment>
<comment type="similarity">
    <text evidence="3">Belongs to the bradykinin-related peptide family.</text>
</comment>
<evidence type="ECO:0000250" key="1"/>
<evidence type="ECO:0000269" key="2">
    <source>
    </source>
</evidence>
<evidence type="ECO:0000305" key="3"/>
<dbReference type="GO" id="GO:0005576">
    <property type="term" value="C:extracellular region"/>
    <property type="evidence" value="ECO:0007669"/>
    <property type="project" value="UniProtKB-SubCell"/>
</dbReference>
<dbReference type="GO" id="GO:0090729">
    <property type="term" value="F:toxin activity"/>
    <property type="evidence" value="ECO:0007669"/>
    <property type="project" value="UniProtKB-KW"/>
</dbReference>
<dbReference type="GO" id="GO:0006952">
    <property type="term" value="P:defense response"/>
    <property type="evidence" value="ECO:0007669"/>
    <property type="project" value="UniProtKB-KW"/>
</dbReference>
<dbReference type="GO" id="GO:0042311">
    <property type="term" value="P:vasodilation"/>
    <property type="evidence" value="ECO:0007669"/>
    <property type="project" value="UniProtKB-KW"/>
</dbReference>
<protein>
    <recommendedName>
        <fullName>[Val1,Thr6]-bradykinyl-Val,Asp</fullName>
    </recommendedName>
</protein>
<accession>P84898</accession>
<reference evidence="3" key="1">
    <citation type="journal article" date="2006" name="Peptides">
        <title>Bradykinin-related peptides from Phyllomedusa hypochondrialis.</title>
        <authorList>
            <person name="Brand G.D."/>
            <person name="Krause F.C."/>
            <person name="Silva L.P."/>
            <person name="Leite J.R.S.A."/>
            <person name="Melo J.A.T."/>
            <person name="Prates M.V."/>
            <person name="Pesquero J.B."/>
            <person name="Santos E.L."/>
            <person name="Nakaie C.R."/>
            <person name="Costa-Neto C.M."/>
            <person name="Bloch C. Jr."/>
        </authorList>
    </citation>
    <scope>PROTEIN SEQUENCE</scope>
    <scope>MASS SPECTROMETRY</scope>
    <scope>HYDROXYLATION AT PRO-2</scope>
    <source>
        <tissue evidence="2">Skin secretion</tissue>
    </source>
</reference>
<keyword id="KW-0878">Amphibian defense peptide</keyword>
<keyword id="KW-0903">Direct protein sequencing</keyword>
<keyword id="KW-1213">G-protein coupled receptor impairing toxin</keyword>
<keyword id="KW-0379">Hydroxylation</keyword>
<keyword id="KW-0964">Secreted</keyword>
<keyword id="KW-0800">Toxin</keyword>
<keyword id="KW-0838">Vasoactive</keyword>
<keyword id="KW-0840">Vasodilator</keyword>
<proteinExistence type="evidence at protein level"/>
<organism>
    <name type="scientific">Pithecopus hypochondrialis</name>
    <name type="common">Orange-legged leaf frog</name>
    <name type="synonym">Phyllomedusa hypochondrialis</name>
    <dbReference type="NCBI Taxonomy" id="317381"/>
    <lineage>
        <taxon>Eukaryota</taxon>
        <taxon>Metazoa</taxon>
        <taxon>Chordata</taxon>
        <taxon>Craniata</taxon>
        <taxon>Vertebrata</taxon>
        <taxon>Euteleostomi</taxon>
        <taxon>Amphibia</taxon>
        <taxon>Batrachia</taxon>
        <taxon>Anura</taxon>
        <taxon>Neobatrachia</taxon>
        <taxon>Hyloidea</taxon>
        <taxon>Hylidae</taxon>
        <taxon>Phyllomedusinae</taxon>
        <taxon>Pithecopus</taxon>
    </lineage>
</organism>
<sequence>VPPGFTPFRVD</sequence>